<sequence>MSSRFFYGGGSDSDSSSSDEEELYSDREEEEKSEEEESSEEEDETSEEEESDEETGARKFLKDVASDSEEEEEEEKVTVVKSAKDKRLDELENTIKLIENAKKINDWAVISTEFDKLNRQVAKITQSGPTPKIYIKAVADLEDFVNETVAKQKSGDKKLNASQAKGFNAAKQRIKKNNKDYGNLIDKYRKDKEDFMESDDEEAIPVIAAPRITKLERIEAPAAAIDDDGFATVGRGGKTLQYTPESILKHLRVIVESRGKKNTDRMEQIRTMEKLLEVAQTPYQRIRVYLTLISTRFDLTSTSSANYMAVDQWKSAEQDFSSLLSVLENNRDHVVFEGAEEWEDDEKQPTIAPGETLYIPGSIVSFAERLDDELTRSLQHIDPHTAEYIERLSDEKLLYTDLVRAQAYVEGLNEVEKTDPRQDSVNRVVMRRLEHVYFKPSQVITILEDATWKSLPSELDSSITPRASSGNVENLVLSLCNYLFKYSDGIIRARAMLCQIYFLALHDQYYRSRDLMLMSHLTENISNFDVSTQILFNRTLVQIGLCAFRSGLIYEAQNTLSEVCGSGRQKELLAQGIIMQRYSTVSPEQERLERQRQLPFHMHINLELLECIYLTSSMFLEVPLMAQTSSSPEMKRRVISKTFRRMLDYNERQVFTGPPENTRDGVIMSAKFLAAGDWKKAAEMLNSIKIWDLMPQPDKIKEMLSQQIQEEGLRTYLFTYAPFYDSLSIATLSNMFELSEKKISAIISRMISHEELAAALDQVNNAIVFRKGVELSRLQSQIVTLADKSMNLLEANEKTLEQRTQGMANAFQRDQGAGARGGRGSGRGGQARGGPRFPGGQQGRRPGGQQFGGGALGGAIKA</sequence>
<organism>
    <name type="scientific">Aspergillus fumigatus (strain CBS 144.89 / FGSC A1163 / CEA10)</name>
    <name type="common">Neosartorya fumigata</name>
    <dbReference type="NCBI Taxonomy" id="451804"/>
    <lineage>
        <taxon>Eukaryota</taxon>
        <taxon>Fungi</taxon>
        <taxon>Dikarya</taxon>
        <taxon>Ascomycota</taxon>
        <taxon>Pezizomycotina</taxon>
        <taxon>Eurotiomycetes</taxon>
        <taxon>Eurotiomycetidae</taxon>
        <taxon>Eurotiales</taxon>
        <taxon>Aspergillaceae</taxon>
        <taxon>Aspergillus</taxon>
        <taxon>Aspergillus subgen. Fumigati</taxon>
    </lineage>
</organism>
<feature type="chain" id="PRO_0000364274" description="Eukaryotic translation initiation factor 3 subunit C">
    <location>
        <begin position="1"/>
        <end position="862"/>
    </location>
</feature>
<feature type="domain" description="PCI" evidence="2">
    <location>
        <begin position="600"/>
        <end position="774"/>
    </location>
</feature>
<feature type="region of interest" description="Disordered" evidence="3">
    <location>
        <begin position="1"/>
        <end position="81"/>
    </location>
</feature>
<feature type="region of interest" description="Disordered" evidence="3">
    <location>
        <begin position="813"/>
        <end position="862"/>
    </location>
</feature>
<feature type="compositionally biased region" description="Acidic residues" evidence="3">
    <location>
        <begin position="17"/>
        <end position="54"/>
    </location>
</feature>
<feature type="compositionally biased region" description="Basic and acidic residues" evidence="3">
    <location>
        <begin position="55"/>
        <end position="65"/>
    </location>
</feature>
<feature type="compositionally biased region" description="Acidic residues" evidence="3">
    <location>
        <begin position="66"/>
        <end position="75"/>
    </location>
</feature>
<feature type="compositionally biased region" description="Gly residues" evidence="3">
    <location>
        <begin position="818"/>
        <end position="862"/>
    </location>
</feature>
<evidence type="ECO:0000255" key="1">
    <source>
        <dbReference type="HAMAP-Rule" id="MF_03002"/>
    </source>
</evidence>
<evidence type="ECO:0000255" key="2">
    <source>
        <dbReference type="PROSITE-ProRule" id="PRU01185"/>
    </source>
</evidence>
<evidence type="ECO:0000256" key="3">
    <source>
        <dbReference type="SAM" id="MobiDB-lite"/>
    </source>
</evidence>
<accession>B0YEH1</accession>
<name>EIF3C_ASPFC</name>
<proteinExistence type="inferred from homology"/>
<protein>
    <recommendedName>
        <fullName evidence="1">Eukaryotic translation initiation factor 3 subunit C</fullName>
        <shortName evidence="1">eIF3c</shortName>
    </recommendedName>
    <alternativeName>
        <fullName evidence="1">Eukaryotic translation initiation factor 3 93 kDa subunit homolog</fullName>
        <shortName evidence="1">eIF3 p93</shortName>
    </alternativeName>
    <alternativeName>
        <fullName evidence="1">Translation initiation factor eIF3, p93 subunit homolog</fullName>
    </alternativeName>
</protein>
<dbReference type="EMBL" id="DS499603">
    <property type="protein sequence ID" value="EDP47315.1"/>
    <property type="molecule type" value="Genomic_DNA"/>
</dbReference>
<dbReference type="SMR" id="B0YEH1"/>
<dbReference type="EnsemblFungi" id="EDP47315">
    <property type="protein sequence ID" value="EDP47315"/>
    <property type="gene ID" value="AFUB_099160"/>
</dbReference>
<dbReference type="VEuPathDB" id="FungiDB:AFUB_099160"/>
<dbReference type="HOGENOM" id="CLU_004304_0_2_1"/>
<dbReference type="OrthoDB" id="101212at5052"/>
<dbReference type="PhylomeDB" id="B0YEH1"/>
<dbReference type="Proteomes" id="UP000001699">
    <property type="component" value="Unassembled WGS sequence"/>
</dbReference>
<dbReference type="GO" id="GO:0010494">
    <property type="term" value="C:cytoplasmic stress granule"/>
    <property type="evidence" value="ECO:0007669"/>
    <property type="project" value="EnsemblFungi"/>
</dbReference>
<dbReference type="GO" id="GO:0016282">
    <property type="term" value="C:eukaryotic 43S preinitiation complex"/>
    <property type="evidence" value="ECO:0007669"/>
    <property type="project" value="UniProtKB-UniRule"/>
</dbReference>
<dbReference type="GO" id="GO:0033290">
    <property type="term" value="C:eukaryotic 48S preinitiation complex"/>
    <property type="evidence" value="ECO:0007669"/>
    <property type="project" value="UniProtKB-UniRule"/>
</dbReference>
<dbReference type="GO" id="GO:0071540">
    <property type="term" value="C:eukaryotic translation initiation factor 3 complex, eIF3e"/>
    <property type="evidence" value="ECO:0007669"/>
    <property type="project" value="EnsemblFungi"/>
</dbReference>
<dbReference type="GO" id="GO:0071541">
    <property type="term" value="C:eukaryotic translation initiation factor 3 complex, eIF3m"/>
    <property type="evidence" value="ECO:0007669"/>
    <property type="project" value="EnsemblFungi"/>
</dbReference>
<dbReference type="GO" id="GO:0043614">
    <property type="term" value="C:multi-eIF complex"/>
    <property type="evidence" value="ECO:0007669"/>
    <property type="project" value="EnsemblFungi"/>
</dbReference>
<dbReference type="GO" id="GO:0003723">
    <property type="term" value="F:RNA binding"/>
    <property type="evidence" value="ECO:0007669"/>
    <property type="project" value="InterPro"/>
</dbReference>
<dbReference type="GO" id="GO:0003743">
    <property type="term" value="F:translation initiation factor activity"/>
    <property type="evidence" value="ECO:0007669"/>
    <property type="project" value="UniProtKB-UniRule"/>
</dbReference>
<dbReference type="GO" id="GO:0031369">
    <property type="term" value="F:translation initiation factor binding"/>
    <property type="evidence" value="ECO:0007669"/>
    <property type="project" value="EnsemblFungi"/>
</dbReference>
<dbReference type="GO" id="GO:0001732">
    <property type="term" value="P:formation of cytoplasmic translation initiation complex"/>
    <property type="evidence" value="ECO:0007669"/>
    <property type="project" value="UniProtKB-UniRule"/>
</dbReference>
<dbReference type="FunFam" id="1.10.10.10:FF:000300">
    <property type="entry name" value="Eukaryotic translation initiation factor 3 subunit C"/>
    <property type="match status" value="1"/>
</dbReference>
<dbReference type="Gene3D" id="1.10.10.10">
    <property type="entry name" value="Winged helix-like DNA-binding domain superfamily/Winged helix DNA-binding domain"/>
    <property type="match status" value="1"/>
</dbReference>
<dbReference type="HAMAP" id="MF_03002">
    <property type="entry name" value="eIF3c"/>
    <property type="match status" value="1"/>
</dbReference>
<dbReference type="InterPro" id="IPR027516">
    <property type="entry name" value="EIF3C"/>
</dbReference>
<dbReference type="InterPro" id="IPR008905">
    <property type="entry name" value="EIF3C_N_dom"/>
</dbReference>
<dbReference type="InterPro" id="IPR000717">
    <property type="entry name" value="PCI_dom"/>
</dbReference>
<dbReference type="InterPro" id="IPR036388">
    <property type="entry name" value="WH-like_DNA-bd_sf"/>
</dbReference>
<dbReference type="InterPro" id="IPR036390">
    <property type="entry name" value="WH_DNA-bd_sf"/>
</dbReference>
<dbReference type="PANTHER" id="PTHR13937">
    <property type="entry name" value="EUKARYOTIC TRANSLATION INITATION FACTOR 3, SUBUNIT 8 EIF3S8 -RELATED"/>
    <property type="match status" value="1"/>
</dbReference>
<dbReference type="PANTHER" id="PTHR13937:SF0">
    <property type="entry name" value="EUKARYOTIC TRANSLATION INITIATION FACTOR 3 SUBUNIT C-RELATED"/>
    <property type="match status" value="1"/>
</dbReference>
<dbReference type="Pfam" id="PF05470">
    <property type="entry name" value="eIF-3c_N"/>
    <property type="match status" value="2"/>
</dbReference>
<dbReference type="Pfam" id="PF01399">
    <property type="entry name" value="PCI"/>
    <property type="match status" value="1"/>
</dbReference>
<dbReference type="SMART" id="SM00088">
    <property type="entry name" value="PINT"/>
    <property type="match status" value="1"/>
</dbReference>
<dbReference type="SUPFAM" id="SSF46785">
    <property type="entry name" value="Winged helix' DNA-binding domain"/>
    <property type="match status" value="1"/>
</dbReference>
<dbReference type="PROSITE" id="PS50250">
    <property type="entry name" value="PCI"/>
    <property type="match status" value="1"/>
</dbReference>
<reference key="1">
    <citation type="journal article" date="2008" name="PLoS Genet.">
        <title>Genomic islands in the pathogenic filamentous fungus Aspergillus fumigatus.</title>
        <authorList>
            <person name="Fedorova N.D."/>
            <person name="Khaldi N."/>
            <person name="Joardar V.S."/>
            <person name="Maiti R."/>
            <person name="Amedeo P."/>
            <person name="Anderson M.J."/>
            <person name="Crabtree J."/>
            <person name="Silva J.C."/>
            <person name="Badger J.H."/>
            <person name="Albarraq A."/>
            <person name="Angiuoli S."/>
            <person name="Bussey H."/>
            <person name="Bowyer P."/>
            <person name="Cotty P.J."/>
            <person name="Dyer P.S."/>
            <person name="Egan A."/>
            <person name="Galens K."/>
            <person name="Fraser-Liggett C.M."/>
            <person name="Haas B.J."/>
            <person name="Inman J.M."/>
            <person name="Kent R."/>
            <person name="Lemieux S."/>
            <person name="Malavazi I."/>
            <person name="Orvis J."/>
            <person name="Roemer T."/>
            <person name="Ronning C.M."/>
            <person name="Sundaram J.P."/>
            <person name="Sutton G."/>
            <person name="Turner G."/>
            <person name="Venter J.C."/>
            <person name="White O.R."/>
            <person name="Whitty B.R."/>
            <person name="Youngman P."/>
            <person name="Wolfe K.H."/>
            <person name="Goldman G.H."/>
            <person name="Wortman J.R."/>
            <person name="Jiang B."/>
            <person name="Denning D.W."/>
            <person name="Nierman W.C."/>
        </authorList>
    </citation>
    <scope>NUCLEOTIDE SEQUENCE [LARGE SCALE GENOMIC DNA]</scope>
    <source>
        <strain>CBS 144.89 / FGSC A1163 / CEA10</strain>
    </source>
</reference>
<comment type="function">
    <text evidence="1">Component of the eukaryotic translation initiation factor 3 (eIF-3) complex, which is involved in protein synthesis of a specialized repertoire of mRNAs and, together with other initiation factors, stimulates binding of mRNA and methionyl-tRNAi to the 40S ribosome. The eIF-3 complex specifically targets and initiates translation of a subset of mRNAs involved in cell proliferation.</text>
</comment>
<comment type="subunit">
    <text evidence="1">Component of the eukaryotic translation initiation factor 3 (eIF-3) complex.</text>
</comment>
<comment type="subcellular location">
    <subcellularLocation>
        <location evidence="1">Cytoplasm</location>
    </subcellularLocation>
</comment>
<comment type="similarity">
    <text evidence="1">Belongs to the eIF-3 subunit C family.</text>
</comment>
<gene>
    <name type="primary">nip1</name>
    <name type="ORF">AFUB_099160</name>
</gene>
<keyword id="KW-0963">Cytoplasm</keyword>
<keyword id="KW-0396">Initiation factor</keyword>
<keyword id="KW-0648">Protein biosynthesis</keyword>